<reference key="1">
    <citation type="journal article" date="1999" name="Nature">
        <title>Sequence and analysis of chromosome 2 of the plant Arabidopsis thaliana.</title>
        <authorList>
            <person name="Lin X."/>
            <person name="Kaul S."/>
            <person name="Rounsley S.D."/>
            <person name="Shea T.P."/>
            <person name="Benito M.-I."/>
            <person name="Town C.D."/>
            <person name="Fujii C.Y."/>
            <person name="Mason T.M."/>
            <person name="Bowman C.L."/>
            <person name="Barnstead M.E."/>
            <person name="Feldblyum T.V."/>
            <person name="Buell C.R."/>
            <person name="Ketchum K.A."/>
            <person name="Lee J.J."/>
            <person name="Ronning C.M."/>
            <person name="Koo H.L."/>
            <person name="Moffat K.S."/>
            <person name="Cronin L.A."/>
            <person name="Shen M."/>
            <person name="Pai G."/>
            <person name="Van Aken S."/>
            <person name="Umayam L."/>
            <person name="Tallon L.J."/>
            <person name="Gill J.E."/>
            <person name="Adams M.D."/>
            <person name="Carrera A.J."/>
            <person name="Creasy T.H."/>
            <person name="Goodman H.M."/>
            <person name="Somerville C.R."/>
            <person name="Copenhaver G.P."/>
            <person name="Preuss D."/>
            <person name="Nierman W.C."/>
            <person name="White O."/>
            <person name="Eisen J.A."/>
            <person name="Salzberg S.L."/>
            <person name="Fraser C.M."/>
            <person name="Venter J.C."/>
        </authorList>
    </citation>
    <scope>NUCLEOTIDE SEQUENCE [LARGE SCALE GENOMIC DNA]</scope>
    <source>
        <strain>cv. Columbia</strain>
    </source>
</reference>
<reference key="2">
    <citation type="journal article" date="2017" name="Plant J.">
        <title>Araport11: a complete reannotation of the Arabidopsis thaliana reference genome.</title>
        <authorList>
            <person name="Cheng C.Y."/>
            <person name="Krishnakumar V."/>
            <person name="Chan A.P."/>
            <person name="Thibaud-Nissen F."/>
            <person name="Schobel S."/>
            <person name="Town C.D."/>
        </authorList>
    </citation>
    <scope>GENOME REANNOTATION</scope>
    <source>
        <strain>cv. Columbia</strain>
    </source>
</reference>
<reference key="3">
    <citation type="journal article" date="2006" name="Plant Biotechnol. J.">
        <title>Simultaneous high-throughput recombinational cloning of open reading frames in closed and open configurations.</title>
        <authorList>
            <person name="Underwood B.A."/>
            <person name="Vanderhaeghen R."/>
            <person name="Whitford R."/>
            <person name="Town C.D."/>
            <person name="Hilson P."/>
        </authorList>
    </citation>
    <scope>NUCLEOTIDE SEQUENCE [LARGE SCALE MRNA] OF 111-692</scope>
    <source>
        <strain>cv. Columbia</strain>
    </source>
</reference>
<reference key="4">
    <citation type="journal article" date="2004" name="Plant Cell">
        <title>Genome-wide analysis of Arabidopsis pentatricopeptide repeat proteins reveals their essential role in organelle biogenesis.</title>
        <authorList>
            <person name="Lurin C."/>
            <person name="Andres C."/>
            <person name="Aubourg S."/>
            <person name="Bellaoui M."/>
            <person name="Bitton F."/>
            <person name="Bruyere C."/>
            <person name="Caboche M."/>
            <person name="Debast C."/>
            <person name="Gualberto J."/>
            <person name="Hoffmann B."/>
            <person name="Lecharny A."/>
            <person name="Le Ret M."/>
            <person name="Martin-Magniette M.-L."/>
            <person name="Mireau H."/>
            <person name="Peeters N."/>
            <person name="Renou J.-P."/>
            <person name="Szurek B."/>
            <person name="Taconnat L."/>
            <person name="Small I."/>
        </authorList>
    </citation>
    <scope>GENE FAMILY</scope>
</reference>
<name>PP148_ARATH</name>
<dbReference type="EMBL" id="AC006955">
    <property type="protein sequence ID" value="AAD22320.1"/>
    <property type="status" value="ALT_INIT"/>
    <property type="molecule type" value="Genomic_DNA"/>
</dbReference>
<dbReference type="EMBL" id="CP002685">
    <property type="protein sequence ID" value="AEC05877.1"/>
    <property type="molecule type" value="Genomic_DNA"/>
</dbReference>
<dbReference type="EMBL" id="DQ446469">
    <property type="protein sequence ID" value="ABE65802.1"/>
    <property type="molecule type" value="mRNA"/>
</dbReference>
<dbReference type="EMBL" id="DQ652961">
    <property type="protein sequence ID" value="ABK28484.1"/>
    <property type="status" value="ALT_SEQ"/>
    <property type="molecule type" value="mRNA"/>
</dbReference>
<dbReference type="PIR" id="D84462">
    <property type="entry name" value="D84462"/>
</dbReference>
<dbReference type="RefSeq" id="NP_178563.2">
    <property type="nucleotide sequence ID" value="NM_126518.3"/>
</dbReference>
<dbReference type="SMR" id="Q9SJ73"/>
<dbReference type="FunCoup" id="Q9SJ73">
    <property type="interactions" value="28"/>
</dbReference>
<dbReference type="iPTMnet" id="Q9SJ73"/>
<dbReference type="PaxDb" id="3702-AT2G04860.1"/>
<dbReference type="EnsemblPlants" id="AT2G04860.1">
    <property type="protein sequence ID" value="AT2G04860.1"/>
    <property type="gene ID" value="AT2G04860"/>
</dbReference>
<dbReference type="GeneID" id="815032"/>
<dbReference type="Gramene" id="AT2G04860.1">
    <property type="protein sequence ID" value="AT2G04860.1"/>
    <property type="gene ID" value="AT2G04860"/>
</dbReference>
<dbReference type="KEGG" id="ath:AT2G04860"/>
<dbReference type="Araport" id="AT2G04860"/>
<dbReference type="TAIR" id="AT2G04860"/>
<dbReference type="eggNOG" id="KOG4197">
    <property type="taxonomic scope" value="Eukaryota"/>
</dbReference>
<dbReference type="HOGENOM" id="CLU_002706_15_10_1"/>
<dbReference type="InParanoid" id="Q9SJ73"/>
<dbReference type="OMA" id="LQHCACM"/>
<dbReference type="PRO" id="PR:Q9SJ73"/>
<dbReference type="Proteomes" id="UP000006548">
    <property type="component" value="Chromosome 2"/>
</dbReference>
<dbReference type="ExpressionAtlas" id="Q9SJ73">
    <property type="expression patterns" value="baseline and differential"/>
</dbReference>
<dbReference type="GO" id="GO:0003723">
    <property type="term" value="F:RNA binding"/>
    <property type="evidence" value="ECO:0007669"/>
    <property type="project" value="InterPro"/>
</dbReference>
<dbReference type="GO" id="GO:0009451">
    <property type="term" value="P:RNA modification"/>
    <property type="evidence" value="ECO:0007669"/>
    <property type="project" value="InterPro"/>
</dbReference>
<dbReference type="FunFam" id="1.25.40.10:FF:000351">
    <property type="entry name" value="Pentatricopeptide repeat-containing protein"/>
    <property type="match status" value="1"/>
</dbReference>
<dbReference type="FunFam" id="1.25.40.10:FF:000381">
    <property type="entry name" value="Pentatricopeptide repeat-containing protein"/>
    <property type="match status" value="1"/>
</dbReference>
<dbReference type="FunFam" id="1.25.40.10:FF:001228">
    <property type="entry name" value="Pentatricopeptide repeat-containing protein At4g20770"/>
    <property type="match status" value="1"/>
</dbReference>
<dbReference type="FunFam" id="1.25.40.10:FF:000090">
    <property type="entry name" value="Pentatricopeptide repeat-containing protein, chloroplastic"/>
    <property type="match status" value="1"/>
</dbReference>
<dbReference type="Gene3D" id="1.25.40.10">
    <property type="entry name" value="Tetratricopeptide repeat domain"/>
    <property type="match status" value="6"/>
</dbReference>
<dbReference type="InterPro" id="IPR046848">
    <property type="entry name" value="E_motif"/>
</dbReference>
<dbReference type="InterPro" id="IPR002885">
    <property type="entry name" value="Pentatricopeptide_rpt"/>
</dbReference>
<dbReference type="InterPro" id="IPR046960">
    <property type="entry name" value="PPR_At4g14850-like_plant"/>
</dbReference>
<dbReference type="InterPro" id="IPR011990">
    <property type="entry name" value="TPR-like_helical_dom_sf"/>
</dbReference>
<dbReference type="NCBIfam" id="TIGR00756">
    <property type="entry name" value="PPR"/>
    <property type="match status" value="4"/>
</dbReference>
<dbReference type="PANTHER" id="PTHR47926">
    <property type="entry name" value="PENTATRICOPEPTIDE REPEAT-CONTAINING PROTEIN"/>
    <property type="match status" value="1"/>
</dbReference>
<dbReference type="PANTHER" id="PTHR47926:SF452">
    <property type="entry name" value="PENTATRICOPEPTIDE REPEAT-CONTAINING PROTEIN"/>
    <property type="match status" value="1"/>
</dbReference>
<dbReference type="Pfam" id="PF20431">
    <property type="entry name" value="E_motif"/>
    <property type="match status" value="1"/>
</dbReference>
<dbReference type="Pfam" id="PF01535">
    <property type="entry name" value="PPR"/>
    <property type="match status" value="4"/>
</dbReference>
<dbReference type="Pfam" id="PF13041">
    <property type="entry name" value="PPR_2"/>
    <property type="match status" value="3"/>
</dbReference>
<dbReference type="PROSITE" id="PS51375">
    <property type="entry name" value="PPR"/>
    <property type="match status" value="16"/>
</dbReference>
<keyword id="KW-1185">Reference proteome</keyword>
<keyword id="KW-0677">Repeat</keyword>
<comment type="similarity">
    <text evidence="1">Belongs to the PPR family. PCMP-E subfamily.</text>
</comment>
<comment type="sequence caution" evidence="1">
    <conflict type="erroneous initiation">
        <sequence resource="EMBL-CDS" id="AAD22320"/>
    </conflict>
    <text>Truncated N-terminus.</text>
</comment>
<comment type="sequence caution" evidence="1">
    <conflict type="erroneous termination">
        <sequence resource="EMBL-CDS" id="ABK28484"/>
    </conflict>
    <text>Extended C-terminus.</text>
</comment>
<comment type="online information" name="Pentatricopeptide repeat proteins">
    <link uri="https://ppr.plantenergy.uwa.edu.au"/>
</comment>
<proteinExistence type="evidence at transcript level"/>
<gene>
    <name type="primary">PCMP-E74</name>
    <name type="ordered locus">At2g04860</name>
    <name type="ORF">F28I8.8</name>
</gene>
<feature type="chain" id="PRO_0000356008" description="Pentatricopeptide repeat-containing protein At2g04860">
    <location>
        <begin position="1"/>
        <end position="692"/>
    </location>
</feature>
<feature type="repeat" description="PPR 1">
    <location>
        <begin position="12"/>
        <end position="46"/>
    </location>
</feature>
<feature type="repeat" description="PPR 2">
    <location>
        <begin position="47"/>
        <end position="83"/>
    </location>
</feature>
<feature type="repeat" description="PPR 3">
    <location>
        <begin position="84"/>
        <end position="114"/>
    </location>
</feature>
<feature type="repeat" description="PPR 4">
    <location>
        <begin position="115"/>
        <end position="149"/>
    </location>
</feature>
<feature type="repeat" description="PPR 5">
    <location>
        <begin position="150"/>
        <end position="184"/>
    </location>
</feature>
<feature type="repeat" description="PPR 6">
    <location>
        <begin position="185"/>
        <end position="215"/>
    </location>
</feature>
<feature type="repeat" description="PPR 7">
    <location>
        <begin position="216"/>
        <end position="250"/>
    </location>
</feature>
<feature type="repeat" description="PPR 8">
    <location>
        <begin position="280"/>
        <end position="314"/>
    </location>
</feature>
<feature type="repeat" description="PPR 9">
    <location>
        <begin position="316"/>
        <end position="345"/>
    </location>
</feature>
<feature type="repeat" description="PPR 10">
    <location>
        <begin position="346"/>
        <end position="380"/>
    </location>
</feature>
<feature type="repeat" description="PPR 11">
    <location>
        <begin position="381"/>
        <end position="411"/>
    </location>
</feature>
<feature type="repeat" description="PPR 12">
    <location>
        <begin position="412"/>
        <end position="447"/>
    </location>
</feature>
<feature type="repeat" description="PPR 13">
    <location>
        <begin position="448"/>
        <end position="482"/>
    </location>
</feature>
<feature type="repeat" description="PPR 14">
    <location>
        <begin position="483"/>
        <end position="513"/>
    </location>
</feature>
<feature type="repeat" description="PPR 15">
    <location>
        <begin position="514"/>
        <end position="548"/>
    </location>
</feature>
<feature type="repeat" description="PPR 16">
    <location>
        <begin position="549"/>
        <end position="584"/>
    </location>
</feature>
<feature type="repeat" description="PPR 17">
    <location>
        <begin position="585"/>
        <end position="615"/>
    </location>
</feature>
<feature type="region of interest" description="Type E motif; degenerate">
    <location>
        <begin position="620"/>
        <end position="692"/>
    </location>
</feature>
<protein>
    <recommendedName>
        <fullName>Pentatricopeptide repeat-containing protein At2g04860</fullName>
    </recommendedName>
</protein>
<sequence length="692" mass="76652">MRITKPITLYRDLSYFHSLLKSCIHGEISSSPITIFRDLLRSSLTPNHFTMSIFLQATTTSFNSFKLQVEQVQTHLTKSGLDRFVYVKTSLLNLYLKKGCVTSAQMLFDEMPERDTVVWNALICGYSRNGYECDAWKLFIVMLQQGFSPSATTLVNLLPFCGQCGFVSQGRSVHGVAAKSGLELDSQVKNALISFYSKCAELGSAEVLFREMKDKSTVSWNTMIGAYSQSGLQEEAITVFKNMFEKNVEISPVTIINLLSAHVSHEPLHCLVVKCGMVNDISVVTSLVCAYSRCGCLVSAERLYASAKQDSIVGLTSIVSCYAEKGDMDIAVVYFSKTRQLCMKIDAVALVGILHGCKKSSHIDIGMSLHGYAIKSGLCTKTLVVNGLITMYSKFDDVETVLFLFEQLQETPLISWNSVISGCVQSGRASTAFEVFHQMMLTGGLLPDAITIASLLAGCSQLCCLNLGKELHGYTLRNNFENENFVCTALIDMYAKCGNEVQAESVFKSIKAPCTATWNSMISGYSLSGLQHRALSCYLEMREKGLKPDEITFLGVLSACNHGGFVDEGKICFRAMIKEFGISPTLQHYALMVGLLGRACLFTEALYLIWKMDIKPDSAVWGALLSACIIHRELEVGEYVARKMFMLDYKNGGLYVLMSNLYATEAMWDDVVRVRNMMKDNGYDGYLGVSQI</sequence>
<organism>
    <name type="scientific">Arabidopsis thaliana</name>
    <name type="common">Mouse-ear cress</name>
    <dbReference type="NCBI Taxonomy" id="3702"/>
    <lineage>
        <taxon>Eukaryota</taxon>
        <taxon>Viridiplantae</taxon>
        <taxon>Streptophyta</taxon>
        <taxon>Embryophyta</taxon>
        <taxon>Tracheophyta</taxon>
        <taxon>Spermatophyta</taxon>
        <taxon>Magnoliopsida</taxon>
        <taxon>eudicotyledons</taxon>
        <taxon>Gunneridae</taxon>
        <taxon>Pentapetalae</taxon>
        <taxon>rosids</taxon>
        <taxon>malvids</taxon>
        <taxon>Brassicales</taxon>
        <taxon>Brassicaceae</taxon>
        <taxon>Camelineae</taxon>
        <taxon>Arabidopsis</taxon>
    </lineage>
</organism>
<accession>Q9SJ73</accession>
<accession>A0MEI9</accession>
<evidence type="ECO:0000305" key="1"/>